<protein>
    <recommendedName>
        <fullName evidence="2">Homocitrate synthase</fullName>
        <shortName evidence="2">HCS</shortName>
        <ecNumber evidence="1 2">2.3.3.14</ecNumber>
    </recommendedName>
</protein>
<feature type="chain" id="PRO_1000213321" description="Homocitrate synthase">
    <location>
        <begin position="1"/>
        <end position="461"/>
    </location>
</feature>
<feature type="domain" description="Pyruvate carboxyltransferase" evidence="3">
    <location>
        <begin position="4"/>
        <end position="259"/>
    </location>
</feature>
<feature type="active site" description="Proton acceptor" evidence="1">
    <location>
        <position position="292"/>
    </location>
</feature>
<feature type="binding site" evidence="1">
    <location>
        <position position="12"/>
    </location>
    <ligand>
        <name>2-oxoglutarate</name>
        <dbReference type="ChEBI" id="CHEBI:16810"/>
    </ligand>
</feature>
<feature type="binding site" evidence="1">
    <location>
        <position position="13"/>
    </location>
    <ligand>
        <name>Mg(2+)</name>
        <dbReference type="ChEBI" id="CHEBI:18420"/>
    </ligand>
</feature>
<feature type="binding site" evidence="1">
    <location>
        <position position="76"/>
    </location>
    <ligand>
        <name>2-oxoglutarate</name>
        <dbReference type="ChEBI" id="CHEBI:16810"/>
    </ligand>
</feature>
<feature type="binding site" evidence="1">
    <location>
        <position position="136"/>
    </location>
    <ligand>
        <name>2-oxoglutarate</name>
        <dbReference type="ChEBI" id="CHEBI:16810"/>
    </ligand>
</feature>
<feature type="binding site" evidence="1">
    <location>
        <position position="170"/>
    </location>
    <ligand>
        <name>2-oxoglutarate</name>
        <dbReference type="ChEBI" id="CHEBI:16810"/>
    </ligand>
</feature>
<feature type="binding site" evidence="1">
    <location>
        <position position="198"/>
    </location>
    <ligand>
        <name>Mg(2+)</name>
        <dbReference type="ChEBI" id="CHEBI:18420"/>
    </ligand>
</feature>
<feature type="binding site" evidence="1">
    <location>
        <position position="200"/>
    </location>
    <ligand>
        <name>Mg(2+)</name>
        <dbReference type="ChEBI" id="CHEBI:18420"/>
    </ligand>
</feature>
<sequence>MIKVGILDSTLREGEQTPGVIFTVDQRVEIAKALSDLGVSMIEAGHPAVSPDIYEGIKRIVKLKKEGIITSEIVGHSRAVKRDIEIAAELEVDRIAIFYGVSDLHLKAKHKATREEALRTIAETISYAKNHGVKVRFTAEDGSRTDFDFLVTVSKTARDAGADRVSIADTVGILYPSKTKELFSALTREVPNLEFDIHAHNDLGLAVANALAAIEGGATIIHATVNGLGERVGIVPLQQIAAAIKYHFGIEVVKLDKLQYVSSLVEKYSGIPMPPNYPITGDYAFLHKAGVHVAGVLNDPRTYEFMPPETFGRTRDYTIDKYTGKHALRDKYEKLGVKISDAEMDQILAKIKSNTTIRFYRDVDLLELAEEVTGRVLKPRPPEQIEALISVKCDSNVYTTSVTRRLSVINGVKEVMEISGDYDILVKVQAKDSNELNQIIESIRATKGVRSTLTSLVLKKM</sequence>
<gene>
    <name type="ordered locus">YN1551_1618</name>
</gene>
<comment type="function">
    <text evidence="1">Catalyzes the aldol-type condensation of 2-oxoglutarate with acetyl-CoA to yield homocitrate. Carries out the first step of the alpha-aminoadipate (AAA) lysine biosynthesis pathway.</text>
</comment>
<comment type="catalytic activity">
    <reaction evidence="1">
        <text>acetyl-CoA + 2-oxoglutarate + H2O = (2R)-homocitrate + CoA + H(+)</text>
        <dbReference type="Rhea" id="RHEA:12929"/>
        <dbReference type="ChEBI" id="CHEBI:15377"/>
        <dbReference type="ChEBI" id="CHEBI:15378"/>
        <dbReference type="ChEBI" id="CHEBI:16810"/>
        <dbReference type="ChEBI" id="CHEBI:57287"/>
        <dbReference type="ChEBI" id="CHEBI:57288"/>
        <dbReference type="ChEBI" id="CHEBI:58884"/>
        <dbReference type="EC" id="2.3.3.14"/>
    </reaction>
    <physiologicalReaction direction="left-to-right" evidence="1">
        <dbReference type="Rhea" id="RHEA:12930"/>
    </physiologicalReaction>
</comment>
<comment type="cofactor">
    <cofactor evidence="1">
        <name>Mg(2+)</name>
        <dbReference type="ChEBI" id="CHEBI:18420"/>
    </cofactor>
    <cofactor evidence="1">
        <name>Mn(2+)</name>
        <dbReference type="ChEBI" id="CHEBI:29035"/>
    </cofactor>
</comment>
<comment type="pathway">
    <text evidence="1">Amino-acid biosynthesis; L-lysine biosynthesis via AAA pathway; L-alpha-aminoadipate from 2-oxoglutarate: step 1/5.</text>
</comment>
<comment type="similarity">
    <text evidence="2">Belongs to the alpha-IPM synthase/homocitrate synthase family. Homocitrate synthase LYS20/LYS21 subfamily.</text>
</comment>
<organism>
    <name type="scientific">Saccharolobus islandicus (strain Y.N.15.51 / Yellowstone #2)</name>
    <name type="common">Sulfolobus islandicus</name>
    <dbReference type="NCBI Taxonomy" id="419942"/>
    <lineage>
        <taxon>Archaea</taxon>
        <taxon>Thermoproteota</taxon>
        <taxon>Thermoprotei</taxon>
        <taxon>Sulfolobales</taxon>
        <taxon>Sulfolobaceae</taxon>
        <taxon>Saccharolobus</taxon>
    </lineage>
</organism>
<evidence type="ECO:0000250" key="1">
    <source>
        <dbReference type="UniProtKB" id="O87198"/>
    </source>
</evidence>
<evidence type="ECO:0000255" key="2">
    <source>
        <dbReference type="HAMAP-Rule" id="MF_02222"/>
    </source>
</evidence>
<evidence type="ECO:0000255" key="3">
    <source>
        <dbReference type="PROSITE-ProRule" id="PRU01151"/>
    </source>
</evidence>
<dbReference type="EC" id="2.3.3.14" evidence="1 2"/>
<dbReference type="EMBL" id="CP001404">
    <property type="protein sequence ID" value="ACP48706.1"/>
    <property type="molecule type" value="Genomic_DNA"/>
</dbReference>
<dbReference type="SMR" id="C3NHU6"/>
<dbReference type="KEGG" id="sin:YN1551_1618"/>
<dbReference type="HOGENOM" id="CLU_022158_4_0_2"/>
<dbReference type="UniPathway" id="UPA00033">
    <property type="reaction ID" value="UER00028"/>
</dbReference>
<dbReference type="Proteomes" id="UP000006818">
    <property type="component" value="Chromosome"/>
</dbReference>
<dbReference type="GO" id="GO:0003852">
    <property type="term" value="F:2-isopropylmalate synthase activity"/>
    <property type="evidence" value="ECO:0007669"/>
    <property type="project" value="TreeGrafter"/>
</dbReference>
<dbReference type="GO" id="GO:0004410">
    <property type="term" value="F:homocitrate synthase activity"/>
    <property type="evidence" value="ECO:0007669"/>
    <property type="project" value="UniProtKB-UniRule"/>
</dbReference>
<dbReference type="GO" id="GO:0046872">
    <property type="term" value="F:metal ion binding"/>
    <property type="evidence" value="ECO:0007669"/>
    <property type="project" value="UniProtKB-KW"/>
</dbReference>
<dbReference type="GO" id="GO:0009098">
    <property type="term" value="P:L-leucine biosynthetic process"/>
    <property type="evidence" value="ECO:0007669"/>
    <property type="project" value="TreeGrafter"/>
</dbReference>
<dbReference type="GO" id="GO:0019878">
    <property type="term" value="P:lysine biosynthetic process via aminoadipic acid"/>
    <property type="evidence" value="ECO:0007669"/>
    <property type="project" value="UniProtKB-UniRule"/>
</dbReference>
<dbReference type="CDD" id="cd07940">
    <property type="entry name" value="DRE_TIM_IPMS"/>
    <property type="match status" value="1"/>
</dbReference>
<dbReference type="Gene3D" id="1.10.238.260">
    <property type="match status" value="1"/>
</dbReference>
<dbReference type="Gene3D" id="3.30.70.920">
    <property type="match status" value="1"/>
</dbReference>
<dbReference type="Gene3D" id="3.20.20.70">
    <property type="entry name" value="Aldolase class I"/>
    <property type="match status" value="1"/>
</dbReference>
<dbReference type="HAMAP" id="MF_02222">
    <property type="entry name" value="Homocitr_synth_fung_arch"/>
    <property type="match status" value="1"/>
</dbReference>
<dbReference type="InterPro" id="IPR050073">
    <property type="entry name" value="2-IPM_HCS-like"/>
</dbReference>
<dbReference type="InterPro" id="IPR002034">
    <property type="entry name" value="AIPM/Hcit_synth_CS"/>
</dbReference>
<dbReference type="InterPro" id="IPR013785">
    <property type="entry name" value="Aldolase_TIM"/>
</dbReference>
<dbReference type="InterPro" id="IPR011008">
    <property type="entry name" value="Dimeric_a/b-barrel"/>
</dbReference>
<dbReference type="InterPro" id="IPR011872">
    <property type="entry name" value="Homocitrate_synth"/>
</dbReference>
<dbReference type="InterPro" id="IPR054691">
    <property type="entry name" value="LeuA/HCS_post-cat"/>
</dbReference>
<dbReference type="InterPro" id="IPR000891">
    <property type="entry name" value="PYR_CT"/>
</dbReference>
<dbReference type="InterPro" id="IPR019887">
    <property type="entry name" value="Tscrpt_reg_AsnC/Lrp_C"/>
</dbReference>
<dbReference type="NCBIfam" id="TIGR02146">
    <property type="entry name" value="LysS_fung_arch"/>
    <property type="match status" value="1"/>
</dbReference>
<dbReference type="NCBIfam" id="NF002085">
    <property type="entry name" value="PRK00915.1-2"/>
    <property type="match status" value="1"/>
</dbReference>
<dbReference type="PANTHER" id="PTHR10277:SF63">
    <property type="entry name" value="HOMOCITRATE SYNTHASE"/>
    <property type="match status" value="1"/>
</dbReference>
<dbReference type="PANTHER" id="PTHR10277">
    <property type="entry name" value="HOMOCITRATE SYNTHASE-RELATED"/>
    <property type="match status" value="1"/>
</dbReference>
<dbReference type="Pfam" id="PF01037">
    <property type="entry name" value="AsnC_trans_reg"/>
    <property type="match status" value="1"/>
</dbReference>
<dbReference type="Pfam" id="PF22617">
    <property type="entry name" value="HCS_D2"/>
    <property type="match status" value="1"/>
</dbReference>
<dbReference type="Pfam" id="PF00682">
    <property type="entry name" value="HMGL-like"/>
    <property type="match status" value="1"/>
</dbReference>
<dbReference type="SUPFAM" id="SSF51569">
    <property type="entry name" value="Aldolase"/>
    <property type="match status" value="1"/>
</dbReference>
<dbReference type="SUPFAM" id="SSF54909">
    <property type="entry name" value="Dimeric alpha+beta barrel"/>
    <property type="match status" value="1"/>
</dbReference>
<dbReference type="PROSITE" id="PS00816">
    <property type="entry name" value="AIPM_HOMOCIT_SYNTH_2"/>
    <property type="match status" value="1"/>
</dbReference>
<dbReference type="PROSITE" id="PS50991">
    <property type="entry name" value="PYR_CT"/>
    <property type="match status" value="1"/>
</dbReference>
<name>HOSA_SACI1</name>
<reference key="1">
    <citation type="journal article" date="2009" name="Proc. Natl. Acad. Sci. U.S.A.">
        <title>Biogeography of the Sulfolobus islandicus pan-genome.</title>
        <authorList>
            <person name="Reno M.L."/>
            <person name="Held N.L."/>
            <person name="Fields C.J."/>
            <person name="Burke P.V."/>
            <person name="Whitaker R.J."/>
        </authorList>
    </citation>
    <scope>NUCLEOTIDE SEQUENCE [LARGE SCALE GENOMIC DNA]</scope>
    <source>
        <strain>Y.N.15.51 / Yellowstone #2</strain>
    </source>
</reference>
<keyword id="KW-0028">Amino-acid biosynthesis</keyword>
<keyword id="KW-0457">Lysine biosynthesis</keyword>
<keyword id="KW-0460">Magnesium</keyword>
<keyword id="KW-0464">Manganese</keyword>
<keyword id="KW-0479">Metal-binding</keyword>
<keyword id="KW-0808">Transferase</keyword>
<proteinExistence type="inferred from homology"/>
<accession>C3NHU6</accession>